<keyword id="KW-0238">DNA-binding</keyword>
<keyword id="KW-0678">Repressor</keyword>
<keyword id="KW-0804">Transcription</keyword>
<keyword id="KW-0805">Transcription regulation</keyword>
<proteinExistence type="inferred from homology"/>
<feature type="chain" id="PRO_0000257733" description="HTH-type transcriptional regulator BetI">
    <location>
        <begin position="1"/>
        <end position="195"/>
    </location>
</feature>
<feature type="domain" description="HTH tetR-type" evidence="2">
    <location>
        <begin position="8"/>
        <end position="68"/>
    </location>
</feature>
<feature type="DNA-binding region" description="H-T-H motif" evidence="2">
    <location>
        <begin position="31"/>
        <end position="50"/>
    </location>
</feature>
<dbReference type="EMBL" id="CP000085">
    <property type="protein sequence ID" value="ABC34105.1"/>
    <property type="molecule type" value="Genomic_DNA"/>
</dbReference>
<dbReference type="RefSeq" id="WP_009896559.1">
    <property type="nucleotide sequence ID" value="NZ_CP008786.1"/>
</dbReference>
<dbReference type="SMR" id="Q2T6C8"/>
<dbReference type="GeneID" id="45118532"/>
<dbReference type="KEGG" id="bte:BTH_II1074"/>
<dbReference type="HOGENOM" id="CLU_069356_15_4_4"/>
<dbReference type="UniPathway" id="UPA00529"/>
<dbReference type="Proteomes" id="UP000001930">
    <property type="component" value="Chromosome II"/>
</dbReference>
<dbReference type="GO" id="GO:0003700">
    <property type="term" value="F:DNA-binding transcription factor activity"/>
    <property type="evidence" value="ECO:0007669"/>
    <property type="project" value="UniProtKB-UniRule"/>
</dbReference>
<dbReference type="GO" id="GO:0000976">
    <property type="term" value="F:transcription cis-regulatory region binding"/>
    <property type="evidence" value="ECO:0007669"/>
    <property type="project" value="TreeGrafter"/>
</dbReference>
<dbReference type="GO" id="GO:0019285">
    <property type="term" value="P:glycine betaine biosynthetic process from choline"/>
    <property type="evidence" value="ECO:0007669"/>
    <property type="project" value="UniProtKB-UniRule"/>
</dbReference>
<dbReference type="GO" id="GO:0045892">
    <property type="term" value="P:negative regulation of DNA-templated transcription"/>
    <property type="evidence" value="ECO:0007669"/>
    <property type="project" value="UniProtKB-UniRule"/>
</dbReference>
<dbReference type="Gene3D" id="1.10.357.10">
    <property type="entry name" value="Tetracycline Repressor, domain 2"/>
    <property type="match status" value="1"/>
</dbReference>
<dbReference type="HAMAP" id="MF_00768">
    <property type="entry name" value="HTH_type_BetI"/>
    <property type="match status" value="1"/>
</dbReference>
<dbReference type="InterPro" id="IPR039538">
    <property type="entry name" value="BetI_C"/>
</dbReference>
<dbReference type="InterPro" id="IPR023772">
    <property type="entry name" value="DNA-bd_HTH_TetR-type_CS"/>
</dbReference>
<dbReference type="InterPro" id="IPR009057">
    <property type="entry name" value="Homeodomain-like_sf"/>
</dbReference>
<dbReference type="InterPro" id="IPR050109">
    <property type="entry name" value="HTH-type_TetR-like_transc_reg"/>
</dbReference>
<dbReference type="InterPro" id="IPR001647">
    <property type="entry name" value="HTH_TetR"/>
</dbReference>
<dbReference type="InterPro" id="IPR036271">
    <property type="entry name" value="Tet_transcr_reg_TetR-rel_C_sf"/>
</dbReference>
<dbReference type="InterPro" id="IPR017757">
    <property type="entry name" value="Tscrpt_rep_BetI"/>
</dbReference>
<dbReference type="NCBIfam" id="TIGR03384">
    <property type="entry name" value="betaine_BetI"/>
    <property type="match status" value="1"/>
</dbReference>
<dbReference type="NCBIfam" id="NF001978">
    <property type="entry name" value="PRK00767.1"/>
    <property type="match status" value="1"/>
</dbReference>
<dbReference type="PANTHER" id="PTHR30055:SF234">
    <property type="entry name" value="HTH-TYPE TRANSCRIPTIONAL REGULATOR BETI"/>
    <property type="match status" value="1"/>
</dbReference>
<dbReference type="PANTHER" id="PTHR30055">
    <property type="entry name" value="HTH-TYPE TRANSCRIPTIONAL REGULATOR RUTR"/>
    <property type="match status" value="1"/>
</dbReference>
<dbReference type="Pfam" id="PF13977">
    <property type="entry name" value="TetR_C_6"/>
    <property type="match status" value="1"/>
</dbReference>
<dbReference type="Pfam" id="PF00440">
    <property type="entry name" value="TetR_N"/>
    <property type="match status" value="1"/>
</dbReference>
<dbReference type="SUPFAM" id="SSF46689">
    <property type="entry name" value="Homeodomain-like"/>
    <property type="match status" value="1"/>
</dbReference>
<dbReference type="SUPFAM" id="SSF48498">
    <property type="entry name" value="Tetracyclin repressor-like, C-terminal domain"/>
    <property type="match status" value="1"/>
</dbReference>
<dbReference type="PROSITE" id="PS01081">
    <property type="entry name" value="HTH_TETR_1"/>
    <property type="match status" value="1"/>
</dbReference>
<dbReference type="PROSITE" id="PS50977">
    <property type="entry name" value="HTH_TETR_2"/>
    <property type="match status" value="1"/>
</dbReference>
<evidence type="ECO:0000250" key="1"/>
<evidence type="ECO:0000255" key="2">
    <source>
        <dbReference type="HAMAP-Rule" id="MF_00768"/>
    </source>
</evidence>
<organism>
    <name type="scientific">Burkholderia thailandensis (strain ATCC 700388 / DSM 13276 / CCUG 48851 / CIP 106301 / E264)</name>
    <dbReference type="NCBI Taxonomy" id="271848"/>
    <lineage>
        <taxon>Bacteria</taxon>
        <taxon>Pseudomonadati</taxon>
        <taxon>Pseudomonadota</taxon>
        <taxon>Betaproteobacteria</taxon>
        <taxon>Burkholderiales</taxon>
        <taxon>Burkholderiaceae</taxon>
        <taxon>Burkholderia</taxon>
        <taxon>pseudomallei group</taxon>
    </lineage>
</organism>
<gene>
    <name evidence="2" type="primary">betI</name>
    <name type="ordered locus">BTH_II1074</name>
</gene>
<comment type="function">
    <text evidence="1">Repressor involved in the biosynthesis of the osmoprotectant glycine betaine. It represses transcription of the choline transporter BetT and the genes of BetAB involved in the synthesis of glycine betaine (By similarity).</text>
</comment>
<comment type="pathway">
    <text>Amine and polyamine biosynthesis; betaine biosynthesis via choline pathway [regulation].</text>
</comment>
<protein>
    <recommendedName>
        <fullName evidence="2">HTH-type transcriptional regulator BetI</fullName>
    </recommendedName>
</protein>
<reference key="1">
    <citation type="journal article" date="2005" name="BMC Genomics">
        <title>Bacterial genome adaptation to niches: divergence of the potential virulence genes in three Burkholderia species of different survival strategies.</title>
        <authorList>
            <person name="Kim H.S."/>
            <person name="Schell M.A."/>
            <person name="Yu Y."/>
            <person name="Ulrich R.L."/>
            <person name="Sarria S.H."/>
            <person name="Nierman W.C."/>
            <person name="DeShazer D."/>
        </authorList>
    </citation>
    <scope>NUCLEOTIDE SEQUENCE [LARGE SCALE GENOMIC DNA]</scope>
    <source>
        <strain>ATCC 700388 / DSM 13276 / CCUG 48851 / CIP 106301 / E264</strain>
    </source>
</reference>
<accession>Q2T6C8</accession>
<sequence length="195" mass="21268">MPKLGMREIRRAQLIDATLRSIDEAGLSGTTLASVAQRANISTGIVSHYFGDKDGLLEATMRHVLRDLWAATARHRAAASDAPRARLRAVVAANFDDTQISAPVMKTWLAFWSQSMHEPTLRRLQHVNTRRLYSNLCAEFAKALPPARAREAASGLAALIDGLWLRGALAGGPFDTKAALKLANDYIDLLLAPRA</sequence>
<name>BETI_BURTA</name>